<protein>
    <recommendedName>
        <fullName>Archaemetzincin-1</fullName>
        <ecNumber evidence="1">3.4.-.-</ecNumber>
    </recommendedName>
    <alternativeName>
        <fullName>Archeobacterial metalloproteinase-like protein 1</fullName>
    </alternativeName>
</protein>
<comment type="function">
    <text evidence="1">Probable zinc metalloprotease.</text>
</comment>
<comment type="cofactor">
    <cofactor evidence="1">
        <name>Zn(2+)</name>
        <dbReference type="ChEBI" id="CHEBI:29105"/>
    </cofactor>
    <text evidence="1">Binds 2 Zn(2+) ions per subunit. One is catalytic, whereas the other seems to have a structural role.</text>
</comment>
<comment type="similarity">
    <text evidence="4">Belongs to the peptidase M54 family.</text>
</comment>
<accession>Q400C9</accession>
<accession>B1H214</accession>
<sequence length="501" mass="55323">MVQCRPPQEFSFGPRALKDALISCDLALKQLYTSAFSPSERLFLSEAYNPHRTLFSTLLIHSAFDWLLSRPEAPEDFETFHASLQLRKQSLARKHIYLQPIDLSEGLAGCPLLDHLRSCAEAFFLGLRVKCLPSVASASINCCSRPARDTDGLQLHTDGILSFLKNNKPGDALCVLGLTLADLYPHDAWTFTFGRFLPGHEVGVCSFARFSGEFLQAGSSIPDSALLEAAAGGPETLPQEGGQTLCYSALGMVQCCKVTCHELCHLLGLGSCRWLRCLLQGVLSLDEALRRPLDLCPICLRKLHHLLGFRLLERYKRLHTWTRVMLEMWSGQEAGEPSVSEDTLPFSADSGMGCESDTEPVTSPSEPVTPDAWSHTFPDGPEPVSEEGLSSLAASEVLLKLGGPVDALEEYRQWLDACIQALEREVAEEELVQVDAAVDALGRWEMFTGQLPVTKQYMPCVKDNVGLRRVLGDKFSSLRRRLSSRRLAKASSSQCHWGAEN</sequence>
<gene>
    <name type="primary">Amz1</name>
</gene>
<organism>
    <name type="scientific">Rattus norvegicus</name>
    <name type="common">Rat</name>
    <dbReference type="NCBI Taxonomy" id="10116"/>
    <lineage>
        <taxon>Eukaryota</taxon>
        <taxon>Metazoa</taxon>
        <taxon>Chordata</taxon>
        <taxon>Craniata</taxon>
        <taxon>Vertebrata</taxon>
        <taxon>Euteleostomi</taxon>
        <taxon>Mammalia</taxon>
        <taxon>Eutheria</taxon>
        <taxon>Euarchontoglires</taxon>
        <taxon>Glires</taxon>
        <taxon>Rodentia</taxon>
        <taxon>Myomorpha</taxon>
        <taxon>Muroidea</taxon>
        <taxon>Muridae</taxon>
        <taxon>Murinae</taxon>
        <taxon>Rattus</taxon>
    </lineage>
</organism>
<reference key="1">
    <citation type="journal article" date="2005" name="J. Biol. Chem.">
        <title>Identification and characterization of human archaemetzincin-1 and - 2, two novel members of a family of metalloproteases widely distributed in Archaea.</title>
        <authorList>
            <person name="Diaz-Perales A."/>
            <person name="Quesada V."/>
            <person name="Peinado J.R."/>
            <person name="Ugalde A.P."/>
            <person name="Alvarez J."/>
            <person name="Suarez M.F."/>
            <person name="Gomis-Rueth X."/>
            <person name="Lopez-Otin C."/>
        </authorList>
    </citation>
    <scope>RETRACTED PAPER</scope>
    <source>
        <strain>Wistar</strain>
    </source>
</reference>
<reference key="2">
    <citation type="journal article" date="2019" name="J. Biol. Chem.">
        <authorList>
            <person name="Diaz-Perales A."/>
            <person name="Quesada V."/>
            <person name="Peinado J.R."/>
            <person name="Ugalde A.P."/>
            <person name="Alvarez J."/>
            <person name="Suarez M.F."/>
            <person name="Gomis-Rueth F.X."/>
            <person name="Lopez-Otin C."/>
        </authorList>
    </citation>
    <scope>RETRACTION NOTICE OF PUBMED:15972818</scope>
</reference>
<reference evidence="6" key="3">
    <citation type="journal article" date="2005" name="Genome Res.">
        <title>Gene and alternative splicing annotation with AIR.</title>
        <authorList>
            <person name="Florea L."/>
            <person name="Di Francesco V."/>
            <person name="Miller J."/>
            <person name="Turner R."/>
            <person name="Yao A."/>
            <person name="Harris M."/>
            <person name="Walenz B."/>
            <person name="Mobarry C."/>
            <person name="Merkulov G.V."/>
            <person name="Charlab R."/>
            <person name="Dew I."/>
            <person name="Deng Z."/>
            <person name="Istrail S."/>
            <person name="Li P."/>
            <person name="Sutton G."/>
        </authorList>
    </citation>
    <scope>NUCLEOTIDE SEQUENCE [LARGE SCALE GENOMIC DNA]</scope>
    <source>
        <strain evidence="6">Brown Norway</strain>
    </source>
</reference>
<reference evidence="5" key="4">
    <citation type="journal article" date="2004" name="Genome Res.">
        <title>The status, quality, and expansion of the NIH full-length cDNA project: the Mammalian Gene Collection (MGC).</title>
        <authorList>
            <consortium name="The MGC Project Team"/>
        </authorList>
    </citation>
    <scope>NUCLEOTIDE SEQUENCE [LARGE SCALE MRNA]</scope>
    <source>
        <tissue evidence="5">Spleen</tissue>
    </source>
</reference>
<proteinExistence type="evidence at transcript level"/>
<evidence type="ECO:0000250" key="1">
    <source>
        <dbReference type="UniProtKB" id="Q8TXW1"/>
    </source>
</evidence>
<evidence type="ECO:0000255" key="2">
    <source>
        <dbReference type="PROSITE-ProRule" id="PRU10095"/>
    </source>
</evidence>
<evidence type="ECO:0000256" key="3">
    <source>
        <dbReference type="SAM" id="MobiDB-lite"/>
    </source>
</evidence>
<evidence type="ECO:0000305" key="4"/>
<evidence type="ECO:0000312" key="5">
    <source>
        <dbReference type="EMBL" id="AAI60815.1"/>
    </source>
</evidence>
<evidence type="ECO:0000312" key="6">
    <source>
        <dbReference type="EMBL" id="EDL89721.1"/>
    </source>
</evidence>
<dbReference type="EC" id="3.4.-.-" evidence="1"/>
<dbReference type="EMBL" id="AJ879913">
    <property type="protein sequence ID" value="CAI53758.1"/>
    <property type="molecule type" value="mRNA"/>
</dbReference>
<dbReference type="EMBL" id="CH474012">
    <property type="protein sequence ID" value="EDL89721.1"/>
    <property type="molecule type" value="Genomic_DNA"/>
</dbReference>
<dbReference type="EMBL" id="BC160815">
    <property type="protein sequence ID" value="AAI60815.1"/>
    <property type="molecule type" value="mRNA"/>
</dbReference>
<dbReference type="RefSeq" id="NP_001040557.1">
    <property type="nucleotide sequence ID" value="NM_001047092.3"/>
</dbReference>
<dbReference type="RefSeq" id="XP_006248992.1">
    <property type="nucleotide sequence ID" value="XM_006248930.5"/>
</dbReference>
<dbReference type="RefSeq" id="XP_006248993.1">
    <property type="nucleotide sequence ID" value="XM_006248931.3"/>
</dbReference>
<dbReference type="RefSeq" id="XP_006248994.1">
    <property type="nucleotide sequence ID" value="XM_006248932.5"/>
</dbReference>
<dbReference type="RefSeq" id="XP_006248995.1">
    <property type="nucleotide sequence ID" value="XM_006248933.3"/>
</dbReference>
<dbReference type="RefSeq" id="XP_038945314.1">
    <property type="nucleotide sequence ID" value="XM_039089386.2"/>
</dbReference>
<dbReference type="SMR" id="Q400C9"/>
<dbReference type="FunCoup" id="Q400C9">
    <property type="interactions" value="29"/>
</dbReference>
<dbReference type="STRING" id="10116.ENSRNOP00000037159"/>
<dbReference type="MEROPS" id="M54.003"/>
<dbReference type="PhosphoSitePlus" id="Q400C9"/>
<dbReference type="PaxDb" id="10116-ENSRNOP00000037159"/>
<dbReference type="Ensembl" id="ENSRNOT00000039726.5">
    <property type="protein sequence ID" value="ENSRNOP00000037159.3"/>
    <property type="gene ID" value="ENSRNOG00000024264.5"/>
</dbReference>
<dbReference type="GeneID" id="304317"/>
<dbReference type="KEGG" id="rno:304317"/>
<dbReference type="UCSC" id="RGD:1311314">
    <property type="organism name" value="rat"/>
</dbReference>
<dbReference type="AGR" id="RGD:1311314"/>
<dbReference type="CTD" id="155185"/>
<dbReference type="RGD" id="1311314">
    <property type="gene designation" value="Amz1"/>
</dbReference>
<dbReference type="eggNOG" id="ENOG502QV2Q">
    <property type="taxonomic scope" value="Eukaryota"/>
</dbReference>
<dbReference type="GeneTree" id="ENSGT00530000063996"/>
<dbReference type="HOGENOM" id="CLU_029710_0_0_1"/>
<dbReference type="InParanoid" id="Q400C9"/>
<dbReference type="OMA" id="LAKWEMF"/>
<dbReference type="OrthoDB" id="2365600at2759"/>
<dbReference type="PhylomeDB" id="Q400C9"/>
<dbReference type="TreeFam" id="TF328603"/>
<dbReference type="PRO" id="PR:Q400C9"/>
<dbReference type="Proteomes" id="UP000002494">
    <property type="component" value="Chromosome 12"/>
</dbReference>
<dbReference type="Proteomes" id="UP000234681">
    <property type="component" value="Chromosome 12"/>
</dbReference>
<dbReference type="Bgee" id="ENSRNOG00000024264">
    <property type="expression patterns" value="Expressed in spleen and 17 other cell types or tissues"/>
</dbReference>
<dbReference type="ExpressionAtlas" id="Q400C9">
    <property type="expression patterns" value="baseline and differential"/>
</dbReference>
<dbReference type="GO" id="GO:0046872">
    <property type="term" value="F:metal ion binding"/>
    <property type="evidence" value="ECO:0007669"/>
    <property type="project" value="UniProtKB-KW"/>
</dbReference>
<dbReference type="GO" id="GO:0008237">
    <property type="term" value="F:metallopeptidase activity"/>
    <property type="evidence" value="ECO:0007669"/>
    <property type="project" value="UniProtKB-KW"/>
</dbReference>
<dbReference type="GO" id="GO:0006508">
    <property type="term" value="P:proteolysis"/>
    <property type="evidence" value="ECO:0007669"/>
    <property type="project" value="UniProtKB-KW"/>
</dbReference>
<dbReference type="CDD" id="cd11375">
    <property type="entry name" value="Peptidase_M54"/>
    <property type="match status" value="1"/>
</dbReference>
<dbReference type="Gene3D" id="3.40.390.10">
    <property type="entry name" value="Collagenase (Catalytic Domain)"/>
    <property type="match status" value="1"/>
</dbReference>
<dbReference type="InterPro" id="IPR052009">
    <property type="entry name" value="Archaemetzincin"/>
</dbReference>
<dbReference type="InterPro" id="IPR024079">
    <property type="entry name" value="MetalloPept_cat_dom_sf"/>
</dbReference>
<dbReference type="InterPro" id="IPR012962">
    <property type="entry name" value="Pept_M54_archaemetzincn"/>
</dbReference>
<dbReference type="PANTHER" id="PTHR32205:SF4">
    <property type="entry name" value="ARCHAEMETZINCIN-1"/>
    <property type="match status" value="1"/>
</dbReference>
<dbReference type="PANTHER" id="PTHR32205">
    <property type="entry name" value="ARCHAEMETZINCIN-2-RELATED"/>
    <property type="match status" value="1"/>
</dbReference>
<dbReference type="PROSITE" id="PS00142">
    <property type="entry name" value="ZINC_PROTEASE"/>
    <property type="match status" value="1"/>
</dbReference>
<keyword id="KW-0378">Hydrolase</keyword>
<keyword id="KW-0479">Metal-binding</keyword>
<keyword id="KW-0482">Metalloprotease</keyword>
<keyword id="KW-0645">Protease</keyword>
<keyword id="KW-1185">Reference proteome</keyword>
<keyword id="KW-0862">Zinc</keyword>
<feature type="chain" id="PRO_0000159616" description="Archaemetzincin-1">
    <location>
        <begin position="1"/>
        <end position="501"/>
    </location>
</feature>
<feature type="region of interest" description="Disordered" evidence="3">
    <location>
        <begin position="349"/>
        <end position="370"/>
    </location>
</feature>
<feature type="active site" description="Proton acceptor" evidence="2">
    <location>
        <position position="262"/>
    </location>
</feature>
<feature type="binding site" evidence="1">
    <location>
        <position position="261"/>
    </location>
    <ligand>
        <name>Zn(2+)</name>
        <dbReference type="ChEBI" id="CHEBI:29105"/>
        <label>1</label>
        <note>catalytic</note>
    </ligand>
</feature>
<feature type="binding site" evidence="1">
    <location>
        <position position="265"/>
    </location>
    <ligand>
        <name>Zn(2+)</name>
        <dbReference type="ChEBI" id="CHEBI:29105"/>
        <label>1</label>
        <note>catalytic</note>
    </ligand>
</feature>
<feature type="binding site" evidence="1">
    <location>
        <position position="272"/>
    </location>
    <ligand>
        <name>Zn(2+)</name>
        <dbReference type="ChEBI" id="CHEBI:29105"/>
        <label>2</label>
    </ligand>
</feature>
<feature type="binding site" evidence="1">
    <location>
        <position position="277"/>
    </location>
    <ligand>
        <name>Zn(2+)</name>
        <dbReference type="ChEBI" id="CHEBI:29105"/>
        <label>2</label>
    </ligand>
</feature>
<feature type="binding site" evidence="1">
    <location>
        <position position="296"/>
    </location>
    <ligand>
        <name>Zn(2+)</name>
        <dbReference type="ChEBI" id="CHEBI:29105"/>
        <label>2</label>
    </ligand>
</feature>
<feature type="binding site" evidence="1">
    <location>
        <position position="299"/>
    </location>
    <ligand>
        <name>Zn(2+)</name>
        <dbReference type="ChEBI" id="CHEBI:29105"/>
        <label>2</label>
    </ligand>
</feature>
<name>AMZ1_RAT</name>